<sequence>MRYSLSLALLGVAAVTVVAHPHTPGRHGVERRAIDLDAFRLQPTAEYVPKEEVPDQSSLAFISNDNYVDVATDLVKSVAPGIEFRVVGDHYVGTNGVAHVNFKQTAHGIDIDNADFNVNVRDGKVFSYGNSFFTGKIPEESPLKKRDFSDPTVALTGATTVLQLPISGEAKAEAKEGTETYTLKGTSGAVSDPEARLVYLVRDDSLALTWRVETDIEDNWLLSYVDANNKEQVHGVVDYVSHASFQVYPWGTNDPLEAGAARVTLTDPWDKASSPFGWLSDGTSTYTTTRGNNAIAQSNPSGGTAYLNNYRPTNANSIFSYPWTPAMSPPSSFVDFSATQLFYTANVFHDLLYKLGFTEAAGNFQVNNNGKGGLGNDQVILNTQDGSGTNNANFATPPDGQNGRMRMYIWTYTTPQRDSSLEAGVVIHEYTHGLSNRLTGGPSNSGCLSALEAGGMGEGWSDFFATAARIKQNDTADTDYPMGEWVAANPKGIRAYPYSTSLTRNPQTYATTNTLSTVHPIGNVWATVLYEVLWALVGKHGLQVSTFPTFDASGVPTSGNFLAQKLVLDGMALQPCNPNFVQARDAIIDADQALTGGANKCELWTAFAKRGLGSGAKYAASKRSVESKTIPAGVC</sequence>
<reference key="1">
    <citation type="journal article" date="2005" name="Nature">
        <title>The genome sequence of the rice blast fungus Magnaporthe grisea.</title>
        <authorList>
            <person name="Dean R.A."/>
            <person name="Talbot N.J."/>
            <person name="Ebbole D.J."/>
            <person name="Farman M.L."/>
            <person name="Mitchell T.K."/>
            <person name="Orbach M.J."/>
            <person name="Thon M.R."/>
            <person name="Kulkarni R."/>
            <person name="Xu J.-R."/>
            <person name="Pan H."/>
            <person name="Read N.D."/>
            <person name="Lee Y.-H."/>
            <person name="Carbone I."/>
            <person name="Brown D."/>
            <person name="Oh Y.Y."/>
            <person name="Donofrio N."/>
            <person name="Jeong J.S."/>
            <person name="Soanes D.M."/>
            <person name="Djonovic S."/>
            <person name="Kolomiets E."/>
            <person name="Rehmeyer C."/>
            <person name="Li W."/>
            <person name="Harding M."/>
            <person name="Kim S."/>
            <person name="Lebrun M.-H."/>
            <person name="Bohnert H."/>
            <person name="Coughlan S."/>
            <person name="Butler J."/>
            <person name="Calvo S.E."/>
            <person name="Ma L.-J."/>
            <person name="Nicol R."/>
            <person name="Purcell S."/>
            <person name="Nusbaum C."/>
            <person name="Galagan J.E."/>
            <person name="Birren B.W."/>
        </authorList>
    </citation>
    <scope>NUCLEOTIDE SEQUENCE [LARGE SCALE GENOMIC DNA]</scope>
    <source>
        <strain>70-15 / ATCC MYA-4617 / FGSC 8958</strain>
    </source>
</reference>
<protein>
    <recommendedName>
        <fullName>Extracellular metalloproteinase MEP</fullName>
        <ecNumber>3.4.24.-</ecNumber>
    </recommendedName>
    <alternativeName>
        <fullName>Elastinolytic metalloproteinase MEP</fullName>
    </alternativeName>
    <alternativeName>
        <fullName>Fungalysin MEP</fullName>
    </alternativeName>
</protein>
<dbReference type="EC" id="3.4.24.-"/>
<dbReference type="EMBL" id="CM001233">
    <property type="protein sequence ID" value="EHA51955.1"/>
    <property type="molecule type" value="Genomic_DNA"/>
</dbReference>
<dbReference type="RefSeq" id="XP_003711762.1">
    <property type="nucleotide sequence ID" value="XM_003711714.1"/>
</dbReference>
<dbReference type="SMR" id="A4QWP8"/>
<dbReference type="MEROPS" id="M36.001"/>
<dbReference type="GlyCosmos" id="A4QWP8">
    <property type="glycosylation" value="1 site, No reported glycans"/>
</dbReference>
<dbReference type="EnsemblFungi" id="MGG_13252T0">
    <property type="protein sequence ID" value="MGG_13252T0"/>
    <property type="gene ID" value="MGG_13252"/>
</dbReference>
<dbReference type="GeneID" id="5049117"/>
<dbReference type="KEGG" id="mgr:MGG_13252"/>
<dbReference type="VEuPathDB" id="FungiDB:MGG_13252"/>
<dbReference type="eggNOG" id="ENOG502QTDC">
    <property type="taxonomic scope" value="Eukaryota"/>
</dbReference>
<dbReference type="HOGENOM" id="CLU_012703_3_0_1"/>
<dbReference type="InParanoid" id="A4QWP8"/>
<dbReference type="OMA" id="IRKDSYT"/>
<dbReference type="OrthoDB" id="3227768at2759"/>
<dbReference type="Proteomes" id="UP000009058">
    <property type="component" value="Chromosome 3"/>
</dbReference>
<dbReference type="GO" id="GO:0005576">
    <property type="term" value="C:extracellular region"/>
    <property type="evidence" value="ECO:0007669"/>
    <property type="project" value="UniProtKB-SubCell"/>
</dbReference>
<dbReference type="GO" id="GO:0004222">
    <property type="term" value="F:metalloendopeptidase activity"/>
    <property type="evidence" value="ECO:0007669"/>
    <property type="project" value="InterPro"/>
</dbReference>
<dbReference type="GO" id="GO:0008270">
    <property type="term" value="F:zinc ion binding"/>
    <property type="evidence" value="ECO:0007669"/>
    <property type="project" value="InterPro"/>
</dbReference>
<dbReference type="GO" id="GO:0006508">
    <property type="term" value="P:proteolysis"/>
    <property type="evidence" value="ECO:0007669"/>
    <property type="project" value="UniProtKB-KW"/>
</dbReference>
<dbReference type="CDD" id="cd09596">
    <property type="entry name" value="M36"/>
    <property type="match status" value="1"/>
</dbReference>
<dbReference type="Gene3D" id="3.10.170.10">
    <property type="match status" value="1"/>
</dbReference>
<dbReference type="Gene3D" id="1.10.390.10">
    <property type="entry name" value="Neutral Protease Domain 2"/>
    <property type="match status" value="1"/>
</dbReference>
<dbReference type="InterPro" id="IPR011096">
    <property type="entry name" value="FTP_domain"/>
</dbReference>
<dbReference type="InterPro" id="IPR050371">
    <property type="entry name" value="Fungal_virulence_M36"/>
</dbReference>
<dbReference type="InterPro" id="IPR001842">
    <property type="entry name" value="Peptidase_M36"/>
</dbReference>
<dbReference type="InterPro" id="IPR027268">
    <property type="entry name" value="Peptidase_M4/M1_CTD_sf"/>
</dbReference>
<dbReference type="PANTHER" id="PTHR33478">
    <property type="entry name" value="EXTRACELLULAR METALLOPROTEINASE MEP"/>
    <property type="match status" value="1"/>
</dbReference>
<dbReference type="PANTHER" id="PTHR33478:SF1">
    <property type="entry name" value="EXTRACELLULAR METALLOPROTEINASE MEP"/>
    <property type="match status" value="1"/>
</dbReference>
<dbReference type="Pfam" id="PF07504">
    <property type="entry name" value="FTP"/>
    <property type="match status" value="1"/>
</dbReference>
<dbReference type="Pfam" id="PF02128">
    <property type="entry name" value="Peptidase_M36"/>
    <property type="match status" value="1"/>
</dbReference>
<dbReference type="PRINTS" id="PR00999">
    <property type="entry name" value="FUNGALYSIN"/>
</dbReference>
<dbReference type="SUPFAM" id="SSF55486">
    <property type="entry name" value="Metalloproteases ('zincins'), catalytic domain"/>
    <property type="match status" value="1"/>
</dbReference>
<dbReference type="PROSITE" id="PS00142">
    <property type="entry name" value="ZINC_PROTEASE"/>
    <property type="match status" value="1"/>
</dbReference>
<organism>
    <name type="scientific">Pyricularia oryzae (strain 70-15 / ATCC MYA-4617 / FGSC 8958)</name>
    <name type="common">Rice blast fungus</name>
    <name type="synonym">Magnaporthe oryzae</name>
    <dbReference type="NCBI Taxonomy" id="242507"/>
    <lineage>
        <taxon>Eukaryota</taxon>
        <taxon>Fungi</taxon>
        <taxon>Dikarya</taxon>
        <taxon>Ascomycota</taxon>
        <taxon>Pezizomycotina</taxon>
        <taxon>Sordariomycetes</taxon>
        <taxon>Sordariomycetidae</taxon>
        <taxon>Magnaporthales</taxon>
        <taxon>Pyriculariaceae</taxon>
        <taxon>Pyricularia</taxon>
    </lineage>
</organism>
<evidence type="ECO:0000250" key="1"/>
<evidence type="ECO:0000255" key="2"/>
<evidence type="ECO:0000255" key="3">
    <source>
        <dbReference type="PROSITE-ProRule" id="PRU10095"/>
    </source>
</evidence>
<evidence type="ECO:0000305" key="4"/>
<comment type="function">
    <text evidence="1">Secreted metalloproteinase that allows assimilation of proteinaceous substrates.</text>
</comment>
<comment type="cofactor">
    <cofactor evidence="1">
        <name>Zn(2+)</name>
        <dbReference type="ChEBI" id="CHEBI:29105"/>
    </cofactor>
    <text evidence="1">Binds 1 zinc ion per subunit.</text>
</comment>
<comment type="subcellular location">
    <subcellularLocation>
        <location evidence="1">Secreted</location>
    </subcellularLocation>
</comment>
<comment type="induction">
    <text>Expression is controlled by the prtT transcription factor.</text>
</comment>
<comment type="similarity">
    <text evidence="4">Belongs to the peptidase M36 family.</text>
</comment>
<name>MEP_PYRO7</name>
<keyword id="KW-0325">Glycoprotein</keyword>
<keyword id="KW-0378">Hydrolase</keyword>
<keyword id="KW-0479">Metal-binding</keyword>
<keyword id="KW-0482">Metalloprotease</keyword>
<keyword id="KW-0645">Protease</keyword>
<keyword id="KW-1185">Reference proteome</keyword>
<keyword id="KW-0964">Secreted</keyword>
<keyword id="KW-0732">Signal</keyword>
<keyword id="KW-0862">Zinc</keyword>
<keyword id="KW-0865">Zymogen</keyword>
<proteinExistence type="evidence at transcript level"/>
<feature type="signal peptide" evidence="2">
    <location>
        <begin position="1"/>
        <end position="19"/>
    </location>
</feature>
<feature type="propeptide" id="PRO_0000407185" evidence="1">
    <location>
        <begin position="20"/>
        <end position="242"/>
    </location>
</feature>
<feature type="chain" id="PRO_0000407186" description="Extracellular metalloproteinase MEP">
    <location>
        <begin position="243"/>
        <end position="635"/>
    </location>
</feature>
<feature type="active site" evidence="3">
    <location>
        <position position="429"/>
    </location>
</feature>
<feature type="binding site" evidence="3">
    <location>
        <position position="428"/>
    </location>
    <ligand>
        <name>Zn(2+)</name>
        <dbReference type="ChEBI" id="CHEBI:29105"/>
        <note>catalytic</note>
    </ligand>
</feature>
<feature type="binding site" evidence="3">
    <location>
        <position position="432"/>
    </location>
    <ligand>
        <name>Zn(2+)</name>
        <dbReference type="ChEBI" id="CHEBI:29105"/>
        <note>catalytic</note>
    </ligand>
</feature>
<feature type="glycosylation site" description="N-linked (GlcNAc...) asparagine" evidence="2">
    <location>
        <position position="473"/>
    </location>
</feature>
<accession>A4QWP8</accession>
<accession>G4N487</accession>
<gene>
    <name type="primary">MEP</name>
    <name type="ORF">MGG_13252</name>
</gene>